<name>PP211_ARATH</name>
<organism>
    <name type="scientific">Arabidopsis thaliana</name>
    <name type="common">Mouse-ear cress</name>
    <dbReference type="NCBI Taxonomy" id="3702"/>
    <lineage>
        <taxon>Eukaryota</taxon>
        <taxon>Viridiplantae</taxon>
        <taxon>Streptophyta</taxon>
        <taxon>Embryophyta</taxon>
        <taxon>Tracheophyta</taxon>
        <taxon>Spermatophyta</taxon>
        <taxon>Magnoliopsida</taxon>
        <taxon>eudicotyledons</taxon>
        <taxon>Gunneridae</taxon>
        <taxon>Pentapetalae</taxon>
        <taxon>rosids</taxon>
        <taxon>malvids</taxon>
        <taxon>Brassicales</taxon>
        <taxon>Brassicaceae</taxon>
        <taxon>Camelineae</taxon>
        <taxon>Arabidopsis</taxon>
    </lineage>
</organism>
<feature type="transit peptide" description="Mitochondrion" evidence="1">
    <location>
        <begin position="1"/>
        <end position="74"/>
    </location>
</feature>
<feature type="chain" id="PRO_0000356070" description="Pentatricopeptide repeat-containing protein At3g04130, mitochondrial">
    <location>
        <begin position="75"/>
        <end position="508"/>
    </location>
</feature>
<feature type="repeat" description="PPR 1">
    <location>
        <begin position="120"/>
        <end position="150"/>
    </location>
</feature>
<feature type="repeat" description="PPR 2">
    <location>
        <begin position="154"/>
        <end position="188"/>
    </location>
</feature>
<feature type="repeat" description="PPR 3">
    <location>
        <begin position="189"/>
        <end position="219"/>
    </location>
</feature>
<feature type="repeat" description="PPR 4">
    <location>
        <begin position="223"/>
        <end position="257"/>
    </location>
</feature>
<feature type="repeat" description="PPR 5">
    <location>
        <begin position="258"/>
        <end position="292"/>
    </location>
</feature>
<feature type="repeat" description="PPR 6">
    <location>
        <begin position="293"/>
        <end position="327"/>
    </location>
</feature>
<feature type="repeat" description="PPR 7">
    <location>
        <begin position="328"/>
        <end position="363"/>
    </location>
</feature>
<feature type="repeat" description="PPR 8">
    <location>
        <begin position="364"/>
        <end position="398"/>
    </location>
</feature>
<feature type="repeat" description="PPR 9">
    <location>
        <begin position="400"/>
        <end position="434"/>
    </location>
</feature>
<feature type="repeat" description="PPR 10">
    <location>
        <begin position="436"/>
        <end position="470"/>
    </location>
</feature>
<protein>
    <recommendedName>
        <fullName>Pentatricopeptide repeat-containing protein At3g04130, mitochondrial</fullName>
    </recommendedName>
</protein>
<dbReference type="EMBL" id="AC016829">
    <property type="protein sequence ID" value="AAF26800.1"/>
    <property type="status" value="ALT_SEQ"/>
    <property type="molecule type" value="Genomic_DNA"/>
</dbReference>
<dbReference type="EMBL" id="CP002686">
    <property type="protein sequence ID" value="AEE74040.1"/>
    <property type="molecule type" value="Genomic_DNA"/>
</dbReference>
<dbReference type="EMBL" id="CP002686">
    <property type="protein sequence ID" value="AEE74041.1"/>
    <property type="molecule type" value="Genomic_DNA"/>
</dbReference>
<dbReference type="EMBL" id="AY050872">
    <property type="status" value="NOT_ANNOTATED_CDS"/>
    <property type="molecule type" value="mRNA"/>
</dbReference>
<dbReference type="RefSeq" id="NP_001030630.1">
    <property type="nucleotide sequence ID" value="NM_001035553.2"/>
</dbReference>
<dbReference type="RefSeq" id="NP_566222.1">
    <property type="nucleotide sequence ID" value="NM_111284.3"/>
</dbReference>
<dbReference type="SMR" id="Q9M8W9"/>
<dbReference type="FunCoup" id="Q9M8W9">
    <property type="interactions" value="1614"/>
</dbReference>
<dbReference type="PaxDb" id="3702-AT3G04130.2"/>
<dbReference type="ProteomicsDB" id="249170"/>
<dbReference type="EnsemblPlants" id="AT3G04130.1">
    <property type="protein sequence ID" value="AT3G04130.1"/>
    <property type="gene ID" value="AT3G04130"/>
</dbReference>
<dbReference type="EnsemblPlants" id="AT3G04130.2">
    <property type="protein sequence ID" value="AT3G04130.2"/>
    <property type="gene ID" value="AT3G04130"/>
</dbReference>
<dbReference type="GeneID" id="819568"/>
<dbReference type="Gramene" id="AT3G04130.1">
    <property type="protein sequence ID" value="AT3G04130.1"/>
    <property type="gene ID" value="AT3G04130"/>
</dbReference>
<dbReference type="Gramene" id="AT3G04130.2">
    <property type="protein sequence ID" value="AT3G04130.2"/>
    <property type="gene ID" value="AT3G04130"/>
</dbReference>
<dbReference type="KEGG" id="ath:AT3G04130"/>
<dbReference type="Araport" id="AT3G04130"/>
<dbReference type="TAIR" id="AT3G04130"/>
<dbReference type="eggNOG" id="KOG4197">
    <property type="taxonomic scope" value="Eukaryota"/>
</dbReference>
<dbReference type="HOGENOM" id="CLU_002706_49_20_1"/>
<dbReference type="InParanoid" id="Q9M8W9"/>
<dbReference type="OMA" id="CEWAYLL"/>
<dbReference type="PhylomeDB" id="Q9M8W9"/>
<dbReference type="PRO" id="PR:Q9M8W9"/>
<dbReference type="Proteomes" id="UP000006548">
    <property type="component" value="Chromosome 3"/>
</dbReference>
<dbReference type="ExpressionAtlas" id="Q9M8W9">
    <property type="expression patterns" value="baseline and differential"/>
</dbReference>
<dbReference type="GO" id="GO:0005739">
    <property type="term" value="C:mitochondrion"/>
    <property type="evidence" value="ECO:0007669"/>
    <property type="project" value="UniProtKB-SubCell"/>
</dbReference>
<dbReference type="Gene3D" id="1.25.40.10">
    <property type="entry name" value="Tetratricopeptide repeat domain"/>
    <property type="match status" value="4"/>
</dbReference>
<dbReference type="InterPro" id="IPR002885">
    <property type="entry name" value="Pentatricopeptide_rpt"/>
</dbReference>
<dbReference type="InterPro" id="IPR011990">
    <property type="entry name" value="TPR-like_helical_dom_sf"/>
</dbReference>
<dbReference type="NCBIfam" id="TIGR00756">
    <property type="entry name" value="PPR"/>
    <property type="match status" value="7"/>
</dbReference>
<dbReference type="PANTHER" id="PTHR47936:SF1">
    <property type="entry name" value="PENTATRICOPEPTIDE REPEAT-CONTAINING PROTEIN GUN1, CHLOROPLASTIC"/>
    <property type="match status" value="1"/>
</dbReference>
<dbReference type="PANTHER" id="PTHR47936">
    <property type="entry name" value="PPR_LONG DOMAIN-CONTAINING PROTEIN"/>
    <property type="match status" value="1"/>
</dbReference>
<dbReference type="Pfam" id="PF12854">
    <property type="entry name" value="PPR_1"/>
    <property type="match status" value="1"/>
</dbReference>
<dbReference type="Pfam" id="PF13041">
    <property type="entry name" value="PPR_2"/>
    <property type="match status" value="2"/>
</dbReference>
<dbReference type="Pfam" id="PF13812">
    <property type="entry name" value="PPR_3"/>
    <property type="match status" value="1"/>
</dbReference>
<dbReference type="SUPFAM" id="SSF48452">
    <property type="entry name" value="TPR-like"/>
    <property type="match status" value="1"/>
</dbReference>
<dbReference type="PROSITE" id="PS51375">
    <property type="entry name" value="PPR"/>
    <property type="match status" value="10"/>
</dbReference>
<comment type="subcellular location">
    <subcellularLocation>
        <location evidence="2">Mitochondrion</location>
    </subcellularLocation>
</comment>
<comment type="similarity">
    <text evidence="2">Belongs to the PPR family. P subfamily.</text>
</comment>
<comment type="sequence caution" evidence="2">
    <conflict type="erroneous gene model prediction">
        <sequence resource="EMBL-CDS" id="AAF26800"/>
    </conflict>
</comment>
<comment type="sequence caution" evidence="2">
    <conflict type="frameshift">
        <sequence resource="EMBL" id="AY050872"/>
    </conflict>
</comment>
<comment type="online information" name="Pentatricopeptide repeat proteins">
    <link uri="https://ppr.plantenergy.uwa.edu.au"/>
</comment>
<reference key="1">
    <citation type="journal article" date="2000" name="Nature">
        <title>Sequence and analysis of chromosome 3 of the plant Arabidopsis thaliana.</title>
        <authorList>
            <person name="Salanoubat M."/>
            <person name="Lemcke K."/>
            <person name="Rieger M."/>
            <person name="Ansorge W."/>
            <person name="Unseld M."/>
            <person name="Fartmann B."/>
            <person name="Valle G."/>
            <person name="Bloecker H."/>
            <person name="Perez-Alonso M."/>
            <person name="Obermaier B."/>
            <person name="Delseny M."/>
            <person name="Boutry M."/>
            <person name="Grivell L.A."/>
            <person name="Mache R."/>
            <person name="Puigdomenech P."/>
            <person name="De Simone V."/>
            <person name="Choisne N."/>
            <person name="Artiguenave F."/>
            <person name="Robert C."/>
            <person name="Brottier P."/>
            <person name="Wincker P."/>
            <person name="Cattolico L."/>
            <person name="Weissenbach J."/>
            <person name="Saurin W."/>
            <person name="Quetier F."/>
            <person name="Schaefer M."/>
            <person name="Mueller-Auer S."/>
            <person name="Gabel C."/>
            <person name="Fuchs M."/>
            <person name="Benes V."/>
            <person name="Wurmbach E."/>
            <person name="Drzonek H."/>
            <person name="Erfle H."/>
            <person name="Jordan N."/>
            <person name="Bangert S."/>
            <person name="Wiedelmann R."/>
            <person name="Kranz H."/>
            <person name="Voss H."/>
            <person name="Holland R."/>
            <person name="Brandt P."/>
            <person name="Nyakatura G."/>
            <person name="Vezzi A."/>
            <person name="D'Angelo M."/>
            <person name="Pallavicini A."/>
            <person name="Toppo S."/>
            <person name="Simionati B."/>
            <person name="Conrad A."/>
            <person name="Hornischer K."/>
            <person name="Kauer G."/>
            <person name="Loehnert T.-H."/>
            <person name="Nordsiek G."/>
            <person name="Reichelt J."/>
            <person name="Scharfe M."/>
            <person name="Schoen O."/>
            <person name="Bargues M."/>
            <person name="Terol J."/>
            <person name="Climent J."/>
            <person name="Navarro P."/>
            <person name="Collado C."/>
            <person name="Perez-Perez A."/>
            <person name="Ottenwaelder B."/>
            <person name="Duchemin D."/>
            <person name="Cooke R."/>
            <person name="Laudie M."/>
            <person name="Berger-Llauro C."/>
            <person name="Purnelle B."/>
            <person name="Masuy D."/>
            <person name="de Haan M."/>
            <person name="Maarse A.C."/>
            <person name="Alcaraz J.-P."/>
            <person name="Cottet A."/>
            <person name="Casacuberta E."/>
            <person name="Monfort A."/>
            <person name="Argiriou A."/>
            <person name="Flores M."/>
            <person name="Liguori R."/>
            <person name="Vitale D."/>
            <person name="Mannhaupt G."/>
            <person name="Haase D."/>
            <person name="Schoof H."/>
            <person name="Rudd S."/>
            <person name="Zaccaria P."/>
            <person name="Mewes H.-W."/>
            <person name="Mayer K.F.X."/>
            <person name="Kaul S."/>
            <person name="Town C.D."/>
            <person name="Koo H.L."/>
            <person name="Tallon L.J."/>
            <person name="Jenkins J."/>
            <person name="Rooney T."/>
            <person name="Rizzo M."/>
            <person name="Walts A."/>
            <person name="Utterback T."/>
            <person name="Fujii C.Y."/>
            <person name="Shea T.P."/>
            <person name="Creasy T.H."/>
            <person name="Haas B."/>
            <person name="Maiti R."/>
            <person name="Wu D."/>
            <person name="Peterson J."/>
            <person name="Van Aken S."/>
            <person name="Pai G."/>
            <person name="Militscher J."/>
            <person name="Sellers P."/>
            <person name="Gill J.E."/>
            <person name="Feldblyum T.V."/>
            <person name="Preuss D."/>
            <person name="Lin X."/>
            <person name="Nierman W.C."/>
            <person name="Salzberg S.L."/>
            <person name="White O."/>
            <person name="Venter J.C."/>
            <person name="Fraser C.M."/>
            <person name="Kaneko T."/>
            <person name="Nakamura Y."/>
            <person name="Sato S."/>
            <person name="Kato T."/>
            <person name="Asamizu E."/>
            <person name="Sasamoto S."/>
            <person name="Kimura T."/>
            <person name="Idesawa K."/>
            <person name="Kawashima K."/>
            <person name="Kishida Y."/>
            <person name="Kiyokawa C."/>
            <person name="Kohara M."/>
            <person name="Matsumoto M."/>
            <person name="Matsuno A."/>
            <person name="Muraki A."/>
            <person name="Nakayama S."/>
            <person name="Nakazaki N."/>
            <person name="Shinpo S."/>
            <person name="Takeuchi C."/>
            <person name="Wada T."/>
            <person name="Watanabe A."/>
            <person name="Yamada M."/>
            <person name="Yasuda M."/>
            <person name="Tabata S."/>
        </authorList>
    </citation>
    <scope>NUCLEOTIDE SEQUENCE [LARGE SCALE GENOMIC DNA]</scope>
    <source>
        <strain>cv. Columbia</strain>
    </source>
</reference>
<reference key="2">
    <citation type="journal article" date="2017" name="Plant J.">
        <title>Araport11: a complete reannotation of the Arabidopsis thaliana reference genome.</title>
        <authorList>
            <person name="Cheng C.Y."/>
            <person name="Krishnakumar V."/>
            <person name="Chan A.P."/>
            <person name="Thibaud-Nissen F."/>
            <person name="Schobel S."/>
            <person name="Town C.D."/>
        </authorList>
    </citation>
    <scope>GENOME REANNOTATION</scope>
    <source>
        <strain>cv. Columbia</strain>
    </source>
</reference>
<reference key="3">
    <citation type="journal article" date="2003" name="Science">
        <title>Empirical analysis of transcriptional activity in the Arabidopsis genome.</title>
        <authorList>
            <person name="Yamada K."/>
            <person name="Lim J."/>
            <person name="Dale J.M."/>
            <person name="Chen H."/>
            <person name="Shinn P."/>
            <person name="Palm C.J."/>
            <person name="Southwick A.M."/>
            <person name="Wu H.C."/>
            <person name="Kim C.J."/>
            <person name="Nguyen M."/>
            <person name="Pham P.K."/>
            <person name="Cheuk R.F."/>
            <person name="Karlin-Newmann G."/>
            <person name="Liu S.X."/>
            <person name="Lam B."/>
            <person name="Sakano H."/>
            <person name="Wu T."/>
            <person name="Yu G."/>
            <person name="Miranda M."/>
            <person name="Quach H.L."/>
            <person name="Tripp M."/>
            <person name="Chang C.H."/>
            <person name="Lee J.M."/>
            <person name="Toriumi M.J."/>
            <person name="Chan M.M."/>
            <person name="Tang C.C."/>
            <person name="Onodera C.S."/>
            <person name="Deng J.M."/>
            <person name="Akiyama K."/>
            <person name="Ansari Y."/>
            <person name="Arakawa T."/>
            <person name="Banh J."/>
            <person name="Banno F."/>
            <person name="Bowser L."/>
            <person name="Brooks S.Y."/>
            <person name="Carninci P."/>
            <person name="Chao Q."/>
            <person name="Choy N."/>
            <person name="Enju A."/>
            <person name="Goldsmith A.D."/>
            <person name="Gurjal M."/>
            <person name="Hansen N.F."/>
            <person name="Hayashizaki Y."/>
            <person name="Johnson-Hopson C."/>
            <person name="Hsuan V.W."/>
            <person name="Iida K."/>
            <person name="Karnes M."/>
            <person name="Khan S."/>
            <person name="Koesema E."/>
            <person name="Ishida J."/>
            <person name="Jiang P.X."/>
            <person name="Jones T."/>
            <person name="Kawai J."/>
            <person name="Kamiya A."/>
            <person name="Meyers C."/>
            <person name="Nakajima M."/>
            <person name="Narusaka M."/>
            <person name="Seki M."/>
            <person name="Sakurai T."/>
            <person name="Satou M."/>
            <person name="Tamse R."/>
            <person name="Vaysberg M."/>
            <person name="Wallender E.K."/>
            <person name="Wong C."/>
            <person name="Yamamura Y."/>
            <person name="Yuan S."/>
            <person name="Shinozaki K."/>
            <person name="Davis R.W."/>
            <person name="Theologis A."/>
            <person name="Ecker J.R."/>
        </authorList>
    </citation>
    <scope>NUCLEOTIDE SEQUENCE [LARGE SCALE MRNA]</scope>
    <source>
        <strain>cv. Columbia</strain>
    </source>
</reference>
<reference key="4">
    <citation type="journal article" date="2004" name="Plant Cell">
        <title>Genome-wide analysis of Arabidopsis pentatricopeptide repeat proteins reveals their essential role in organelle biogenesis.</title>
        <authorList>
            <person name="Lurin C."/>
            <person name="Andres C."/>
            <person name="Aubourg S."/>
            <person name="Bellaoui M."/>
            <person name="Bitton F."/>
            <person name="Bruyere C."/>
            <person name="Caboche M."/>
            <person name="Debast C."/>
            <person name="Gualberto J."/>
            <person name="Hoffmann B."/>
            <person name="Lecharny A."/>
            <person name="Le Ret M."/>
            <person name="Martin-Magniette M.-L."/>
            <person name="Mireau H."/>
            <person name="Peeters N."/>
            <person name="Renou J.-P."/>
            <person name="Szurek B."/>
            <person name="Taconnat L."/>
            <person name="Small I."/>
        </authorList>
    </citation>
    <scope>GENE FAMILY</scope>
</reference>
<accession>Q9M8W9</accession>
<proteinExistence type="evidence at transcript level"/>
<gene>
    <name type="ordered locus">At3g04130</name>
    <name type="ORF">T6K12.25</name>
</gene>
<sequence length="508" mass="58706">MSWLIQNRIGNTLLRLNPSSSSIAIFSTFIKNLSTASEQLPETLDEYSQSEEIWNVIVGRDGDRDSEDDVFKRLSSDEICKRVNLSDGLVHKLLHRFRDDWRSALGILKWAESCKGHKHSSDAYDMAVDILGKAKKWDRMKEFVERMRGDKLVTLNTVAKIMRRFAGAGEWEEAVGIFDRLGEFGLEKNTESMNLLLDTLCKEKRVEQARVVLLQLKSHITPNAHTFNIFIHGWCKANRVEEALWTIQEMKGHGFRPCVISYTTIIRCYCQQFEFIKVYEMLSEMEANGSPPNSITYTTIMSSLNAQKEFEEALRVATRMKRSGCKPDSLFYNCLIHTLARAGRLEEAERVFRVEMPELGVSINTSTYNSMIAMYCHHDEEDKAIELLKEMESSNLCNPDVHTYQPLLRSCFKRGDVVEVGKLLKEMVTKHHLSLDESTYTFLIQRLCRANMCEWAYCLFEEMISQDITPRHRTCLLLLEEVKKKNMHESAERIEHIMKTVKLTAPVK</sequence>
<evidence type="ECO:0000255" key="1"/>
<evidence type="ECO:0000305" key="2"/>
<keyword id="KW-0496">Mitochondrion</keyword>
<keyword id="KW-1185">Reference proteome</keyword>
<keyword id="KW-0677">Repeat</keyword>
<keyword id="KW-0809">Transit peptide</keyword>